<accession>Q5F8I7</accession>
<organism>
    <name type="scientific">Neisseria gonorrhoeae (strain ATCC 700825 / FA 1090)</name>
    <dbReference type="NCBI Taxonomy" id="242231"/>
    <lineage>
        <taxon>Bacteria</taxon>
        <taxon>Pseudomonadati</taxon>
        <taxon>Pseudomonadota</taxon>
        <taxon>Betaproteobacteria</taxon>
        <taxon>Neisseriales</taxon>
        <taxon>Neisseriaceae</taxon>
        <taxon>Neisseria</taxon>
    </lineage>
</organism>
<sequence length="219" mass="24688">MDTWHDALGGEKQQPYFQEILNAVRQERLSGQIIYPPEADVFNAFRLTAFDRVKVVILGQDPYHGVGQAHGLAFSVRQGVRIPPSLLNIYKELETDIEGFSIPAHGCLTAWAEQGILLLNTVLTVRAGQAHSHALLGWERFTDTVIRQLATHRKHLVFMLWGGYAQQKGRLIDSQNHLILTAPHPSPLSAYRGFFGCRHFSQANSYLSQHGIEPINWKL</sequence>
<protein>
    <recommendedName>
        <fullName evidence="1">Uracil-DNA glycosylase</fullName>
        <shortName evidence="1">UDG</shortName>
        <ecNumber evidence="1">3.2.2.27</ecNumber>
    </recommendedName>
</protein>
<keyword id="KW-0963">Cytoplasm</keyword>
<keyword id="KW-0227">DNA damage</keyword>
<keyword id="KW-0234">DNA repair</keyword>
<keyword id="KW-0378">Hydrolase</keyword>
<keyword id="KW-1185">Reference proteome</keyword>
<proteinExistence type="inferred from homology"/>
<dbReference type="EC" id="3.2.2.27" evidence="1"/>
<dbReference type="EMBL" id="AE004969">
    <property type="protein sequence ID" value="AAW89500.1"/>
    <property type="molecule type" value="Genomic_DNA"/>
</dbReference>
<dbReference type="RefSeq" id="WP_003688628.1">
    <property type="nucleotide sequence ID" value="NC_002946.2"/>
</dbReference>
<dbReference type="RefSeq" id="YP_207912.1">
    <property type="nucleotide sequence ID" value="NC_002946.2"/>
</dbReference>
<dbReference type="SMR" id="Q5F8I7"/>
<dbReference type="STRING" id="242231.NGO_0786"/>
<dbReference type="GeneID" id="66753125"/>
<dbReference type="KEGG" id="ngo:NGO_0786"/>
<dbReference type="PATRIC" id="fig|242231.10.peg.932"/>
<dbReference type="HOGENOM" id="CLU_032162_3_0_4"/>
<dbReference type="Proteomes" id="UP000000535">
    <property type="component" value="Chromosome"/>
</dbReference>
<dbReference type="GO" id="GO:0005737">
    <property type="term" value="C:cytoplasm"/>
    <property type="evidence" value="ECO:0007669"/>
    <property type="project" value="UniProtKB-SubCell"/>
</dbReference>
<dbReference type="GO" id="GO:0004844">
    <property type="term" value="F:uracil DNA N-glycosylase activity"/>
    <property type="evidence" value="ECO:0007669"/>
    <property type="project" value="UniProtKB-UniRule"/>
</dbReference>
<dbReference type="GO" id="GO:0097510">
    <property type="term" value="P:base-excision repair, AP site formation via deaminated base removal"/>
    <property type="evidence" value="ECO:0007669"/>
    <property type="project" value="TreeGrafter"/>
</dbReference>
<dbReference type="CDD" id="cd10027">
    <property type="entry name" value="UDG-F1-like"/>
    <property type="match status" value="1"/>
</dbReference>
<dbReference type="FunFam" id="3.40.470.10:FF:000001">
    <property type="entry name" value="Uracil-DNA glycosylase"/>
    <property type="match status" value="1"/>
</dbReference>
<dbReference type="Gene3D" id="3.40.470.10">
    <property type="entry name" value="Uracil-DNA glycosylase-like domain"/>
    <property type="match status" value="1"/>
</dbReference>
<dbReference type="HAMAP" id="MF_00148">
    <property type="entry name" value="UDG"/>
    <property type="match status" value="1"/>
</dbReference>
<dbReference type="InterPro" id="IPR002043">
    <property type="entry name" value="UDG_fam1"/>
</dbReference>
<dbReference type="InterPro" id="IPR018085">
    <property type="entry name" value="Ura-DNA_Glyclase_AS"/>
</dbReference>
<dbReference type="InterPro" id="IPR005122">
    <property type="entry name" value="Uracil-DNA_glycosylase-like"/>
</dbReference>
<dbReference type="InterPro" id="IPR036895">
    <property type="entry name" value="Uracil-DNA_glycosylase-like_sf"/>
</dbReference>
<dbReference type="NCBIfam" id="NF003588">
    <property type="entry name" value="PRK05254.1-1"/>
    <property type="match status" value="1"/>
</dbReference>
<dbReference type="NCBIfam" id="NF003589">
    <property type="entry name" value="PRK05254.1-2"/>
    <property type="match status" value="1"/>
</dbReference>
<dbReference type="NCBIfam" id="NF003591">
    <property type="entry name" value="PRK05254.1-4"/>
    <property type="match status" value="1"/>
</dbReference>
<dbReference type="NCBIfam" id="NF003592">
    <property type="entry name" value="PRK05254.1-5"/>
    <property type="match status" value="1"/>
</dbReference>
<dbReference type="NCBIfam" id="TIGR00628">
    <property type="entry name" value="ung"/>
    <property type="match status" value="1"/>
</dbReference>
<dbReference type="PANTHER" id="PTHR11264">
    <property type="entry name" value="URACIL-DNA GLYCOSYLASE"/>
    <property type="match status" value="1"/>
</dbReference>
<dbReference type="PANTHER" id="PTHR11264:SF0">
    <property type="entry name" value="URACIL-DNA GLYCOSYLASE"/>
    <property type="match status" value="1"/>
</dbReference>
<dbReference type="Pfam" id="PF03167">
    <property type="entry name" value="UDG"/>
    <property type="match status" value="1"/>
</dbReference>
<dbReference type="SMART" id="SM00986">
    <property type="entry name" value="UDG"/>
    <property type="match status" value="1"/>
</dbReference>
<dbReference type="SMART" id="SM00987">
    <property type="entry name" value="UreE_C"/>
    <property type="match status" value="1"/>
</dbReference>
<dbReference type="SUPFAM" id="SSF52141">
    <property type="entry name" value="Uracil-DNA glycosylase-like"/>
    <property type="match status" value="1"/>
</dbReference>
<dbReference type="PROSITE" id="PS00130">
    <property type="entry name" value="U_DNA_GLYCOSYLASE"/>
    <property type="match status" value="1"/>
</dbReference>
<evidence type="ECO:0000255" key="1">
    <source>
        <dbReference type="HAMAP-Rule" id="MF_00148"/>
    </source>
</evidence>
<feature type="chain" id="PRO_1000009920" description="Uracil-DNA glycosylase">
    <location>
        <begin position="1"/>
        <end position="219"/>
    </location>
</feature>
<feature type="active site" description="Proton acceptor" evidence="1">
    <location>
        <position position="61"/>
    </location>
</feature>
<name>UNG_NEIG1</name>
<reference key="1">
    <citation type="submission" date="2003-03" db="EMBL/GenBank/DDBJ databases">
        <title>The complete genome sequence of Neisseria gonorrhoeae.</title>
        <authorList>
            <person name="Lewis L.A."/>
            <person name="Gillaspy A.F."/>
            <person name="McLaughlin R.E."/>
            <person name="Gipson M."/>
            <person name="Ducey T.F."/>
            <person name="Ownbey T."/>
            <person name="Hartman K."/>
            <person name="Nydick C."/>
            <person name="Carson M.B."/>
            <person name="Vaughn J."/>
            <person name="Thomson C."/>
            <person name="Song L."/>
            <person name="Lin S."/>
            <person name="Yuan X."/>
            <person name="Najar F."/>
            <person name="Zhan M."/>
            <person name="Ren Q."/>
            <person name="Zhu H."/>
            <person name="Qi S."/>
            <person name="Kenton S.M."/>
            <person name="Lai H."/>
            <person name="White J.D."/>
            <person name="Clifton S."/>
            <person name="Roe B.A."/>
            <person name="Dyer D.W."/>
        </authorList>
    </citation>
    <scope>NUCLEOTIDE SEQUENCE [LARGE SCALE GENOMIC DNA]</scope>
    <source>
        <strain>ATCC 700825 / FA 1090</strain>
    </source>
</reference>
<gene>
    <name evidence="1" type="primary">ung</name>
    <name type="ordered locus">NGO_0786</name>
</gene>
<comment type="function">
    <text evidence="1">Excises uracil residues from the DNA which can arise as a result of misincorporation of dUMP residues by DNA polymerase or due to deamination of cytosine.</text>
</comment>
<comment type="catalytic activity">
    <reaction evidence="1">
        <text>Hydrolyzes single-stranded DNA or mismatched double-stranded DNA and polynucleotides, releasing free uracil.</text>
        <dbReference type="EC" id="3.2.2.27"/>
    </reaction>
</comment>
<comment type="subcellular location">
    <subcellularLocation>
        <location evidence="1">Cytoplasm</location>
    </subcellularLocation>
</comment>
<comment type="similarity">
    <text evidence="1">Belongs to the uracil-DNA glycosylase (UDG) superfamily. UNG family.</text>
</comment>